<comment type="function">
    <text evidence="1">Involved in lipid remodeling during GPI-anchor maturation.</text>
</comment>
<comment type="subunit">
    <text evidence="1">Interacts with PGAP2/FRAG1.</text>
</comment>
<comment type="subcellular location">
    <subcellularLocation>
        <location evidence="5">Membrane</location>
        <topology evidence="5">Multi-pass membrane protein</topology>
    </subcellularLocation>
</comment>
<comment type="similarity">
    <text evidence="5">Belongs to the PGAP2IP family.</text>
</comment>
<keyword id="KW-0325">Glycoprotein</keyword>
<keyword id="KW-0337">GPI-anchor biosynthesis</keyword>
<keyword id="KW-0472">Membrane</keyword>
<keyword id="KW-1267">Proteomics identification</keyword>
<keyword id="KW-1185">Reference proteome</keyword>
<keyword id="KW-0812">Transmembrane</keyword>
<keyword id="KW-1133">Transmembrane helix</keyword>
<organism>
    <name type="scientific">Homo sapiens</name>
    <name type="common">Human</name>
    <dbReference type="NCBI Taxonomy" id="9606"/>
    <lineage>
        <taxon>Eukaryota</taxon>
        <taxon>Metazoa</taxon>
        <taxon>Chordata</taxon>
        <taxon>Craniata</taxon>
        <taxon>Vertebrata</taxon>
        <taxon>Euteleostomi</taxon>
        <taxon>Mammalia</taxon>
        <taxon>Eutheria</taxon>
        <taxon>Euarchontoglires</taxon>
        <taxon>Primates</taxon>
        <taxon>Haplorrhini</taxon>
        <taxon>Catarrhini</taxon>
        <taxon>Hominidae</taxon>
        <taxon>Homo</taxon>
    </lineage>
</organism>
<accession>Q9H720</accession>
<accession>B2RPD7</accession>
<gene>
    <name type="primary">CWH43</name>
    <name type="synonym">PGAP2IP</name>
</gene>
<feature type="chain" id="PRO_0000320615" description="PGAP2-interacting protein">
    <location>
        <begin position="1"/>
        <end position="699"/>
    </location>
</feature>
<feature type="transmembrane region" description="Helical" evidence="2">
    <location>
        <begin position="13"/>
        <end position="33"/>
    </location>
</feature>
<feature type="transmembrane region" description="Helical" evidence="2">
    <location>
        <begin position="41"/>
        <end position="61"/>
    </location>
</feature>
<feature type="transmembrane region" description="Helical" evidence="2">
    <location>
        <begin position="93"/>
        <end position="113"/>
    </location>
</feature>
<feature type="transmembrane region" description="Helical" evidence="2">
    <location>
        <begin position="123"/>
        <end position="143"/>
    </location>
</feature>
<feature type="transmembrane region" description="Helical" evidence="2">
    <location>
        <begin position="196"/>
        <end position="216"/>
    </location>
</feature>
<feature type="transmembrane region" description="Helical" evidence="2">
    <location>
        <begin position="237"/>
        <end position="257"/>
    </location>
</feature>
<feature type="transmembrane region" description="Helical" evidence="2">
    <location>
        <begin position="273"/>
        <end position="293"/>
    </location>
</feature>
<feature type="transmembrane region" description="Helical" evidence="2">
    <location>
        <begin position="316"/>
        <end position="336"/>
    </location>
</feature>
<feature type="transmembrane region" description="Helical" evidence="2">
    <location>
        <begin position="349"/>
        <end position="369"/>
    </location>
</feature>
<feature type="transmembrane region" description="Helical" evidence="2">
    <location>
        <begin position="390"/>
        <end position="410"/>
    </location>
</feature>
<feature type="region of interest" description="Required for function in lipid remodeling" evidence="1">
    <location>
        <begin position="607"/>
        <end position="627"/>
    </location>
</feature>
<feature type="glycosylation site" description="N-linked (GlcNAc...) asparagine" evidence="2">
    <location>
        <position position="455"/>
    </location>
</feature>
<feature type="sequence variant" id="VAR_039234" description="In dbSNP:rs3747690." evidence="3 4">
    <original>P</original>
    <variation>T</variation>
    <location>
        <position position="2"/>
    </location>
</feature>
<feature type="sequence variant" id="VAR_039235" description="In dbSNP:rs1051447." evidence="3 4">
    <original>H</original>
    <variation>N</variation>
    <location>
        <position position="689"/>
    </location>
</feature>
<evidence type="ECO:0000250" key="1"/>
<evidence type="ECO:0000255" key="2"/>
<evidence type="ECO:0000269" key="3">
    <source>
    </source>
</evidence>
<evidence type="ECO:0000269" key="4">
    <source>
    </source>
</evidence>
<evidence type="ECO:0000305" key="5"/>
<name>PG2IP_HUMAN</name>
<dbReference type="EMBL" id="AK025164">
    <property type="protein sequence ID" value="BAB15080.1"/>
    <property type="molecule type" value="mRNA"/>
</dbReference>
<dbReference type="EMBL" id="AC020593">
    <property type="status" value="NOT_ANNOTATED_CDS"/>
    <property type="molecule type" value="Genomic_DNA"/>
</dbReference>
<dbReference type="EMBL" id="BC137387">
    <property type="protein sequence ID" value="AAI37388.1"/>
    <property type="molecule type" value="mRNA"/>
</dbReference>
<dbReference type="EMBL" id="BC137388">
    <property type="protein sequence ID" value="AAI37389.1"/>
    <property type="molecule type" value="mRNA"/>
</dbReference>
<dbReference type="CCDS" id="CCDS3486.1"/>
<dbReference type="RefSeq" id="NP_001273720.1">
    <property type="nucleotide sequence ID" value="NM_001286791.1"/>
</dbReference>
<dbReference type="RefSeq" id="NP_079363.2">
    <property type="nucleotide sequence ID" value="NM_025087.3"/>
</dbReference>
<dbReference type="SMR" id="Q9H720"/>
<dbReference type="BioGRID" id="123148">
    <property type="interactions" value="2"/>
</dbReference>
<dbReference type="FunCoup" id="Q9H720">
    <property type="interactions" value="111"/>
</dbReference>
<dbReference type="IntAct" id="Q9H720">
    <property type="interactions" value="2"/>
</dbReference>
<dbReference type="STRING" id="9606.ENSP00000226432"/>
<dbReference type="GlyCosmos" id="Q9H720">
    <property type="glycosylation" value="1 site, No reported glycans"/>
</dbReference>
<dbReference type="GlyGen" id="Q9H720">
    <property type="glycosylation" value="1 site"/>
</dbReference>
<dbReference type="iPTMnet" id="Q9H720"/>
<dbReference type="PhosphoSitePlus" id="Q9H720"/>
<dbReference type="BioMuta" id="CWH43"/>
<dbReference type="DMDM" id="296439265"/>
<dbReference type="MassIVE" id="Q9H720"/>
<dbReference type="PaxDb" id="9606-ENSP00000226432"/>
<dbReference type="PeptideAtlas" id="Q9H720"/>
<dbReference type="ProteomicsDB" id="81077"/>
<dbReference type="Antibodypedia" id="56515">
    <property type="antibodies" value="48 antibodies from 8 providers"/>
</dbReference>
<dbReference type="DNASU" id="80157"/>
<dbReference type="Ensembl" id="ENST00000226432.9">
    <property type="protein sequence ID" value="ENSP00000226432.4"/>
    <property type="gene ID" value="ENSG00000109182.12"/>
</dbReference>
<dbReference type="GeneID" id="80157"/>
<dbReference type="KEGG" id="hsa:80157"/>
<dbReference type="MANE-Select" id="ENST00000226432.9">
    <property type="protein sequence ID" value="ENSP00000226432.4"/>
    <property type="RefSeq nucleotide sequence ID" value="NM_025087.3"/>
    <property type="RefSeq protein sequence ID" value="NP_079363.2"/>
</dbReference>
<dbReference type="UCSC" id="uc003gyv.4">
    <property type="organism name" value="human"/>
</dbReference>
<dbReference type="AGR" id="HGNC:26133"/>
<dbReference type="CTD" id="80157"/>
<dbReference type="DisGeNET" id="80157"/>
<dbReference type="GeneCards" id="CWH43"/>
<dbReference type="HGNC" id="HGNC:26133">
    <property type="gene designation" value="CWH43"/>
</dbReference>
<dbReference type="HPA" id="ENSG00000109182">
    <property type="expression patterns" value="Tissue enhanced (esophagus, prostate, skin)"/>
</dbReference>
<dbReference type="MIM" id="618561">
    <property type="type" value="gene"/>
</dbReference>
<dbReference type="neXtProt" id="NX_Q9H720"/>
<dbReference type="OpenTargets" id="ENSG00000109182"/>
<dbReference type="PharmGKB" id="PA165663488"/>
<dbReference type="VEuPathDB" id="HostDB:ENSG00000109182"/>
<dbReference type="eggNOG" id="ENOG502QVQN">
    <property type="taxonomic scope" value="Eukaryota"/>
</dbReference>
<dbReference type="GeneTree" id="ENSGT00510000048509"/>
<dbReference type="InParanoid" id="Q9H720"/>
<dbReference type="OMA" id="CVWYFPL"/>
<dbReference type="OrthoDB" id="68581at2759"/>
<dbReference type="PAN-GO" id="Q9H720">
    <property type="GO annotations" value="2 GO annotations based on evolutionary models"/>
</dbReference>
<dbReference type="PhylomeDB" id="Q9H720"/>
<dbReference type="TreeFam" id="TF328857"/>
<dbReference type="PathwayCommons" id="Q9H720"/>
<dbReference type="SignaLink" id="Q9H720"/>
<dbReference type="BioGRID-ORCS" id="80157">
    <property type="hits" value="9 hits in 1147 CRISPR screens"/>
</dbReference>
<dbReference type="ChiTaRS" id="CWH43">
    <property type="organism name" value="human"/>
</dbReference>
<dbReference type="GenomeRNAi" id="80157"/>
<dbReference type="Pharos" id="Q9H720">
    <property type="development level" value="Tdark"/>
</dbReference>
<dbReference type="PRO" id="PR:Q9H720"/>
<dbReference type="Proteomes" id="UP000005640">
    <property type="component" value="Chromosome 4"/>
</dbReference>
<dbReference type="RNAct" id="Q9H720">
    <property type="molecule type" value="protein"/>
</dbReference>
<dbReference type="Bgee" id="ENSG00000109182">
    <property type="expression patterns" value="Expressed in tongue squamous epithelium and 115 other cell types or tissues"/>
</dbReference>
<dbReference type="ExpressionAtlas" id="Q9H720">
    <property type="expression patterns" value="baseline and differential"/>
</dbReference>
<dbReference type="GO" id="GO:0005783">
    <property type="term" value="C:endoplasmic reticulum"/>
    <property type="evidence" value="ECO:0000318"/>
    <property type="project" value="GO_Central"/>
</dbReference>
<dbReference type="GO" id="GO:0005576">
    <property type="term" value="C:extracellular region"/>
    <property type="evidence" value="ECO:0007669"/>
    <property type="project" value="GOC"/>
</dbReference>
<dbReference type="GO" id="GO:0016020">
    <property type="term" value="C:membrane"/>
    <property type="evidence" value="ECO:0007669"/>
    <property type="project" value="UniProtKB-SubCell"/>
</dbReference>
<dbReference type="GO" id="GO:0007420">
    <property type="term" value="P:brain development"/>
    <property type="evidence" value="ECO:0007669"/>
    <property type="project" value="Ensembl"/>
</dbReference>
<dbReference type="GO" id="GO:0007155">
    <property type="term" value="P:cell adhesion"/>
    <property type="evidence" value="ECO:0007669"/>
    <property type="project" value="Ensembl"/>
</dbReference>
<dbReference type="GO" id="GO:0090660">
    <property type="term" value="P:cerebrospinal fluid circulation"/>
    <property type="evidence" value="ECO:0007669"/>
    <property type="project" value="Ensembl"/>
</dbReference>
<dbReference type="GO" id="GO:0044782">
    <property type="term" value="P:cilium organization"/>
    <property type="evidence" value="ECO:0007669"/>
    <property type="project" value="Ensembl"/>
</dbReference>
<dbReference type="GO" id="GO:0006506">
    <property type="term" value="P:GPI anchor biosynthetic process"/>
    <property type="evidence" value="ECO:0000318"/>
    <property type="project" value="GO_Central"/>
</dbReference>
<dbReference type="GO" id="GO:0006509">
    <property type="term" value="P:membrane protein ectodomain proteolysis"/>
    <property type="evidence" value="ECO:0007669"/>
    <property type="project" value="Ensembl"/>
</dbReference>
<dbReference type="GO" id="GO:0050885">
    <property type="term" value="P:neuromuscular process controlling balance"/>
    <property type="evidence" value="ECO:0007669"/>
    <property type="project" value="Ensembl"/>
</dbReference>
<dbReference type="GO" id="GO:0002790">
    <property type="term" value="P:peptide secretion"/>
    <property type="evidence" value="ECO:0007669"/>
    <property type="project" value="Ensembl"/>
</dbReference>
<dbReference type="GO" id="GO:0006606">
    <property type="term" value="P:protein import into nucleus"/>
    <property type="evidence" value="ECO:0007669"/>
    <property type="project" value="Ensembl"/>
</dbReference>
<dbReference type="GO" id="GO:0071692">
    <property type="term" value="P:protein localization to extracellular region"/>
    <property type="evidence" value="ECO:0007669"/>
    <property type="project" value="Ensembl"/>
</dbReference>
<dbReference type="GO" id="GO:0006487">
    <property type="term" value="P:protein N-linked glycosylation"/>
    <property type="evidence" value="ECO:0007669"/>
    <property type="project" value="Ensembl"/>
</dbReference>
<dbReference type="GO" id="GO:0006612">
    <property type="term" value="P:protein targeting to membrane"/>
    <property type="evidence" value="ECO:0007669"/>
    <property type="project" value="Ensembl"/>
</dbReference>
<dbReference type="GO" id="GO:1902531">
    <property type="term" value="P:regulation of intracellular signal transduction"/>
    <property type="evidence" value="ECO:0007669"/>
    <property type="project" value="Ensembl"/>
</dbReference>
<dbReference type="GO" id="GO:0042306">
    <property type="term" value="P:regulation of protein import into nucleus"/>
    <property type="evidence" value="ECO:0007669"/>
    <property type="project" value="Ensembl"/>
</dbReference>
<dbReference type="GO" id="GO:0070613">
    <property type="term" value="P:regulation of protein processing"/>
    <property type="evidence" value="ECO:0007669"/>
    <property type="project" value="Ensembl"/>
</dbReference>
<dbReference type="GO" id="GO:0090659">
    <property type="term" value="P:walking behavior"/>
    <property type="evidence" value="ECO:0007669"/>
    <property type="project" value="Ensembl"/>
</dbReference>
<dbReference type="FunFam" id="3.60.10.10:FF:000021">
    <property type="entry name" value="PGAP2-interacting protein isoform A"/>
    <property type="match status" value="1"/>
</dbReference>
<dbReference type="Gene3D" id="3.60.10.10">
    <property type="entry name" value="Endonuclease/exonuclease/phosphatase"/>
    <property type="match status" value="1"/>
</dbReference>
<dbReference type="InterPro" id="IPR036691">
    <property type="entry name" value="Endo/exonu/phosph_ase_sf"/>
</dbReference>
<dbReference type="InterPro" id="IPR051916">
    <property type="entry name" value="GPI-anchor_lipid_remodeler"/>
</dbReference>
<dbReference type="InterPro" id="IPR053912">
    <property type="entry name" value="PGAP2IP_TM_1nd"/>
</dbReference>
<dbReference type="InterPro" id="IPR053911">
    <property type="entry name" value="PGAP2IP_TM_2nd"/>
</dbReference>
<dbReference type="PANTHER" id="PTHR14859">
    <property type="entry name" value="CALCOFLUOR WHITE HYPERSENSITIVE PROTEIN PRECURSOR"/>
    <property type="match status" value="1"/>
</dbReference>
<dbReference type="PANTHER" id="PTHR14859:SF1">
    <property type="entry name" value="PGAP2-INTERACTING PROTEIN"/>
    <property type="match status" value="1"/>
</dbReference>
<dbReference type="Pfam" id="PF23022">
    <property type="entry name" value="6TM_1st_PGAP2IP"/>
    <property type="match status" value="1"/>
</dbReference>
<dbReference type="Pfam" id="PF23021">
    <property type="entry name" value="6TM_2nd_PGAP2IP"/>
    <property type="match status" value="1"/>
</dbReference>
<dbReference type="Pfam" id="PF23226">
    <property type="entry name" value="Exo_endo_phos_PGAP2IP"/>
    <property type="match status" value="1"/>
</dbReference>
<dbReference type="SUPFAM" id="SSF56219">
    <property type="entry name" value="DNase I-like"/>
    <property type="match status" value="1"/>
</dbReference>
<proteinExistence type="evidence at protein level"/>
<sequence length="699" mass="78584">MPSLWREILLESLLGCVSWSLYHDLGPMIYYFPLQTLELTGLEGFSIAFLSPIFLTITPFWKLVNKKWMLTLLRIITIGSIASFQAPNAKLRLMVLALGVSSSLIVQAVTWWSGSHLQRYLRIWGFILGQIVLVVLRIWYTSLNPIWSYQMSNKVILTLSAIATLDRIGTDGDCSKPEEKKTGEVATGMASRPNWLLAGAAFGSLVFLTHWVFGEVSLVSRWAVSGHPHPGPDPNPFGGAVLLCLASGLMLPSCLWFRGTGLIWWVTGTASAAGLLYLHTWAAAVSGCVFAIFTASMWPQTLGHLINSGTNPGKTMTIAMIFYLLEIFFCAWCTAFKFVPGGVYARERSDVLLGTMMLIIGLNMLFGPKKNLDLLLQTKNSSKVLFRKSEKYMKLFLWLLVGVGLLGLGLRHKAYERKLGKVAPTKEVSAAIWPFRFGYDNEGWSSLERSAHLLNETGADFITILESDASKPYMGNNDLTMWLGEKLGFYTDFGPSTRYHTWGIMALSRYPIVKSEHHLLPSPEGEIAPAITLTVNISGKLVDFVVTHFGNHEDDLDRKLQAIAVSKLLKSSSNQVIFLGYITSAPGSRDYLQLTEHGNVKDIDSTDHDRWCEYIMYRGLIRLGYARISHAELSDSEIQMAKFRIPDDPTNYRDNQKVVIDHREVSEKIHFNPRFGSYKEGHNYENNHHFHMNTPKYFL</sequence>
<reference key="1">
    <citation type="journal article" date="2004" name="Nat. Genet.">
        <title>Complete sequencing and characterization of 21,243 full-length human cDNAs.</title>
        <authorList>
            <person name="Ota T."/>
            <person name="Suzuki Y."/>
            <person name="Nishikawa T."/>
            <person name="Otsuki T."/>
            <person name="Sugiyama T."/>
            <person name="Irie R."/>
            <person name="Wakamatsu A."/>
            <person name="Hayashi K."/>
            <person name="Sato H."/>
            <person name="Nagai K."/>
            <person name="Kimura K."/>
            <person name="Makita H."/>
            <person name="Sekine M."/>
            <person name="Obayashi M."/>
            <person name="Nishi T."/>
            <person name="Shibahara T."/>
            <person name="Tanaka T."/>
            <person name="Ishii S."/>
            <person name="Yamamoto J."/>
            <person name="Saito K."/>
            <person name="Kawai Y."/>
            <person name="Isono Y."/>
            <person name="Nakamura Y."/>
            <person name="Nagahari K."/>
            <person name="Murakami K."/>
            <person name="Yasuda T."/>
            <person name="Iwayanagi T."/>
            <person name="Wagatsuma M."/>
            <person name="Shiratori A."/>
            <person name="Sudo H."/>
            <person name="Hosoiri T."/>
            <person name="Kaku Y."/>
            <person name="Kodaira H."/>
            <person name="Kondo H."/>
            <person name="Sugawara M."/>
            <person name="Takahashi M."/>
            <person name="Kanda K."/>
            <person name="Yokoi T."/>
            <person name="Furuya T."/>
            <person name="Kikkawa E."/>
            <person name="Omura Y."/>
            <person name="Abe K."/>
            <person name="Kamihara K."/>
            <person name="Katsuta N."/>
            <person name="Sato K."/>
            <person name="Tanikawa M."/>
            <person name="Yamazaki M."/>
            <person name="Ninomiya K."/>
            <person name="Ishibashi T."/>
            <person name="Yamashita H."/>
            <person name="Murakawa K."/>
            <person name="Fujimori K."/>
            <person name="Tanai H."/>
            <person name="Kimata M."/>
            <person name="Watanabe M."/>
            <person name="Hiraoka S."/>
            <person name="Chiba Y."/>
            <person name="Ishida S."/>
            <person name="Ono Y."/>
            <person name="Takiguchi S."/>
            <person name="Watanabe S."/>
            <person name="Yosida M."/>
            <person name="Hotuta T."/>
            <person name="Kusano J."/>
            <person name="Kanehori K."/>
            <person name="Takahashi-Fujii A."/>
            <person name="Hara H."/>
            <person name="Tanase T.-O."/>
            <person name="Nomura Y."/>
            <person name="Togiya S."/>
            <person name="Komai F."/>
            <person name="Hara R."/>
            <person name="Takeuchi K."/>
            <person name="Arita M."/>
            <person name="Imose N."/>
            <person name="Musashino K."/>
            <person name="Yuuki H."/>
            <person name="Oshima A."/>
            <person name="Sasaki N."/>
            <person name="Aotsuka S."/>
            <person name="Yoshikawa Y."/>
            <person name="Matsunawa H."/>
            <person name="Ichihara T."/>
            <person name="Shiohata N."/>
            <person name="Sano S."/>
            <person name="Moriya S."/>
            <person name="Momiyama H."/>
            <person name="Satoh N."/>
            <person name="Takami S."/>
            <person name="Terashima Y."/>
            <person name="Suzuki O."/>
            <person name="Nakagawa S."/>
            <person name="Senoh A."/>
            <person name="Mizoguchi H."/>
            <person name="Goto Y."/>
            <person name="Shimizu F."/>
            <person name="Wakebe H."/>
            <person name="Hishigaki H."/>
            <person name="Watanabe T."/>
            <person name="Sugiyama A."/>
            <person name="Takemoto M."/>
            <person name="Kawakami B."/>
            <person name="Yamazaki M."/>
            <person name="Watanabe K."/>
            <person name="Kumagai A."/>
            <person name="Itakura S."/>
            <person name="Fukuzumi Y."/>
            <person name="Fujimori Y."/>
            <person name="Komiyama M."/>
            <person name="Tashiro H."/>
            <person name="Tanigami A."/>
            <person name="Fujiwara T."/>
            <person name="Ono T."/>
            <person name="Yamada K."/>
            <person name="Fujii Y."/>
            <person name="Ozaki K."/>
            <person name="Hirao M."/>
            <person name="Ohmori Y."/>
            <person name="Kawabata A."/>
            <person name="Hikiji T."/>
            <person name="Kobatake N."/>
            <person name="Inagaki H."/>
            <person name="Ikema Y."/>
            <person name="Okamoto S."/>
            <person name="Okitani R."/>
            <person name="Kawakami T."/>
            <person name="Noguchi S."/>
            <person name="Itoh T."/>
            <person name="Shigeta K."/>
            <person name="Senba T."/>
            <person name="Matsumura K."/>
            <person name="Nakajima Y."/>
            <person name="Mizuno T."/>
            <person name="Morinaga M."/>
            <person name="Sasaki M."/>
            <person name="Togashi T."/>
            <person name="Oyama M."/>
            <person name="Hata H."/>
            <person name="Watanabe M."/>
            <person name="Komatsu T."/>
            <person name="Mizushima-Sugano J."/>
            <person name="Satoh T."/>
            <person name="Shirai Y."/>
            <person name="Takahashi Y."/>
            <person name="Nakagawa K."/>
            <person name="Okumura K."/>
            <person name="Nagase T."/>
            <person name="Nomura N."/>
            <person name="Kikuchi H."/>
            <person name="Masuho Y."/>
            <person name="Yamashita R."/>
            <person name="Nakai K."/>
            <person name="Yada T."/>
            <person name="Nakamura Y."/>
            <person name="Ohara O."/>
            <person name="Isogai T."/>
            <person name="Sugano S."/>
        </authorList>
    </citation>
    <scope>NUCLEOTIDE SEQUENCE [LARGE SCALE MRNA]</scope>
    <scope>VARIANTS THR-2 AND ASN-689</scope>
    <source>
        <tissue>Colon</tissue>
    </source>
</reference>
<reference key="2">
    <citation type="journal article" date="2005" name="Nature">
        <title>Generation and annotation of the DNA sequences of human chromosomes 2 and 4.</title>
        <authorList>
            <person name="Hillier L.W."/>
            <person name="Graves T.A."/>
            <person name="Fulton R.S."/>
            <person name="Fulton L.A."/>
            <person name="Pepin K.H."/>
            <person name="Minx P."/>
            <person name="Wagner-McPherson C."/>
            <person name="Layman D."/>
            <person name="Wylie K."/>
            <person name="Sekhon M."/>
            <person name="Becker M.C."/>
            <person name="Fewell G.A."/>
            <person name="Delehaunty K.D."/>
            <person name="Miner T.L."/>
            <person name="Nash W.E."/>
            <person name="Kremitzki C."/>
            <person name="Oddy L."/>
            <person name="Du H."/>
            <person name="Sun H."/>
            <person name="Bradshaw-Cordum H."/>
            <person name="Ali J."/>
            <person name="Carter J."/>
            <person name="Cordes M."/>
            <person name="Harris A."/>
            <person name="Isak A."/>
            <person name="van Brunt A."/>
            <person name="Nguyen C."/>
            <person name="Du F."/>
            <person name="Courtney L."/>
            <person name="Kalicki J."/>
            <person name="Ozersky P."/>
            <person name="Abbott S."/>
            <person name="Armstrong J."/>
            <person name="Belter E.A."/>
            <person name="Caruso L."/>
            <person name="Cedroni M."/>
            <person name="Cotton M."/>
            <person name="Davidson T."/>
            <person name="Desai A."/>
            <person name="Elliott G."/>
            <person name="Erb T."/>
            <person name="Fronick C."/>
            <person name="Gaige T."/>
            <person name="Haakenson W."/>
            <person name="Haglund K."/>
            <person name="Holmes A."/>
            <person name="Harkins R."/>
            <person name="Kim K."/>
            <person name="Kruchowski S.S."/>
            <person name="Strong C.M."/>
            <person name="Grewal N."/>
            <person name="Goyea E."/>
            <person name="Hou S."/>
            <person name="Levy A."/>
            <person name="Martinka S."/>
            <person name="Mead K."/>
            <person name="McLellan M.D."/>
            <person name="Meyer R."/>
            <person name="Randall-Maher J."/>
            <person name="Tomlinson C."/>
            <person name="Dauphin-Kohlberg S."/>
            <person name="Kozlowicz-Reilly A."/>
            <person name="Shah N."/>
            <person name="Swearengen-Shahid S."/>
            <person name="Snider J."/>
            <person name="Strong J.T."/>
            <person name="Thompson J."/>
            <person name="Yoakum M."/>
            <person name="Leonard S."/>
            <person name="Pearman C."/>
            <person name="Trani L."/>
            <person name="Radionenko M."/>
            <person name="Waligorski J.E."/>
            <person name="Wang C."/>
            <person name="Rock S.M."/>
            <person name="Tin-Wollam A.-M."/>
            <person name="Maupin R."/>
            <person name="Latreille P."/>
            <person name="Wendl M.C."/>
            <person name="Yang S.-P."/>
            <person name="Pohl C."/>
            <person name="Wallis J.W."/>
            <person name="Spieth J."/>
            <person name="Bieri T.A."/>
            <person name="Berkowicz N."/>
            <person name="Nelson J.O."/>
            <person name="Osborne J."/>
            <person name="Ding L."/>
            <person name="Meyer R."/>
            <person name="Sabo A."/>
            <person name="Shotland Y."/>
            <person name="Sinha P."/>
            <person name="Wohldmann P.E."/>
            <person name="Cook L.L."/>
            <person name="Hickenbotham M.T."/>
            <person name="Eldred J."/>
            <person name="Williams D."/>
            <person name="Jones T.A."/>
            <person name="She X."/>
            <person name="Ciccarelli F.D."/>
            <person name="Izaurralde E."/>
            <person name="Taylor J."/>
            <person name="Schmutz J."/>
            <person name="Myers R.M."/>
            <person name="Cox D.R."/>
            <person name="Huang X."/>
            <person name="McPherson J.D."/>
            <person name="Mardis E.R."/>
            <person name="Clifton S.W."/>
            <person name="Warren W.C."/>
            <person name="Chinwalla A.T."/>
            <person name="Eddy S.R."/>
            <person name="Marra M.A."/>
            <person name="Ovcharenko I."/>
            <person name="Furey T.S."/>
            <person name="Miller W."/>
            <person name="Eichler E.E."/>
            <person name="Bork P."/>
            <person name="Suyama M."/>
            <person name="Torrents D."/>
            <person name="Waterston R.H."/>
            <person name="Wilson R.K."/>
        </authorList>
    </citation>
    <scope>NUCLEOTIDE SEQUENCE [LARGE SCALE GENOMIC DNA]</scope>
</reference>
<reference key="3">
    <citation type="journal article" date="2004" name="Genome Res.">
        <title>The status, quality, and expansion of the NIH full-length cDNA project: the Mammalian Gene Collection (MGC).</title>
        <authorList>
            <consortium name="The MGC Project Team"/>
        </authorList>
    </citation>
    <scope>NUCLEOTIDE SEQUENCE [LARGE SCALE MRNA]</scope>
    <scope>VARIANTS THR-2 AND ASN-689</scope>
</reference>
<protein>
    <recommendedName>
        <fullName>PGAP2-interacting protein</fullName>
    </recommendedName>
    <alternativeName>
        <fullName>Cell wall biogenesis protein 43 C-terminal homolog</fullName>
    </alternativeName>
</protein>